<proteinExistence type="inferred from homology"/>
<protein>
    <recommendedName>
        <fullName evidence="1">Triosephosphate isomerase</fullName>
        <shortName evidence="1">TIM</shortName>
        <shortName evidence="1">TPI</shortName>
        <ecNumber evidence="1">5.3.1.1</ecNumber>
    </recommendedName>
    <alternativeName>
        <fullName evidence="1">Triose-phosphate isomerase</fullName>
    </alternativeName>
</protein>
<gene>
    <name evidence="1" type="primary">tpiA</name>
    <name type="ordered locus">Bcer98_3680</name>
</gene>
<feature type="chain" id="PRO_1000076634" description="Triosephosphate isomerase">
    <location>
        <begin position="1"/>
        <end position="251"/>
    </location>
</feature>
<feature type="active site" description="Electrophile" evidence="1">
    <location>
        <position position="95"/>
    </location>
</feature>
<feature type="active site" description="Proton acceptor" evidence="1">
    <location>
        <position position="167"/>
    </location>
</feature>
<feature type="binding site" evidence="1">
    <location>
        <begin position="9"/>
        <end position="11"/>
    </location>
    <ligand>
        <name>substrate</name>
    </ligand>
</feature>
<feature type="binding site" evidence="1">
    <location>
        <position position="173"/>
    </location>
    <ligand>
        <name>substrate</name>
    </ligand>
</feature>
<feature type="binding site" evidence="1">
    <location>
        <position position="213"/>
    </location>
    <ligand>
        <name>substrate</name>
    </ligand>
</feature>
<feature type="binding site" evidence="1">
    <location>
        <begin position="234"/>
        <end position="235"/>
    </location>
    <ligand>
        <name>substrate</name>
    </ligand>
</feature>
<feature type="modified residue" description="Phosphoserine" evidence="1">
    <location>
        <position position="213"/>
    </location>
</feature>
<organism>
    <name type="scientific">Bacillus cytotoxicus (strain DSM 22905 / CIP 110041 / 391-98 / NVH 391-98)</name>
    <dbReference type="NCBI Taxonomy" id="315749"/>
    <lineage>
        <taxon>Bacteria</taxon>
        <taxon>Bacillati</taxon>
        <taxon>Bacillota</taxon>
        <taxon>Bacilli</taxon>
        <taxon>Bacillales</taxon>
        <taxon>Bacillaceae</taxon>
        <taxon>Bacillus</taxon>
        <taxon>Bacillus cereus group</taxon>
    </lineage>
</organism>
<sequence length="251" mass="26505">MRKPIIAGNWKMNKTLSEAVSFVEEVKGQIPAASAVDAVVCSPALFLERLVAATQGTDLKVGAQNMHFEKNGAFTGEISPVALSDLKVSYVVLGHSERREMFAETDETVNKKTLAAFEHGLTPIVCCGETLEERESGKTFDLVAGQVTKALAGLTEEQVKATVIAYEPIWAIGTGKSSSAEDANEVCAHIRKVVAEAVSPAAAEAVRIQYGGSVKPGNIKEYMAQPDIDGALVGGASLEPASFLGLLEAVK</sequence>
<evidence type="ECO:0000255" key="1">
    <source>
        <dbReference type="HAMAP-Rule" id="MF_00147"/>
    </source>
</evidence>
<accession>A7GUR9</accession>
<keyword id="KW-0963">Cytoplasm</keyword>
<keyword id="KW-0312">Gluconeogenesis</keyword>
<keyword id="KW-0324">Glycolysis</keyword>
<keyword id="KW-0413">Isomerase</keyword>
<keyword id="KW-0597">Phosphoprotein</keyword>
<name>TPIS_BACCN</name>
<dbReference type="EC" id="5.3.1.1" evidence="1"/>
<dbReference type="EMBL" id="CP000764">
    <property type="protein sequence ID" value="ABS23877.1"/>
    <property type="molecule type" value="Genomic_DNA"/>
</dbReference>
<dbReference type="RefSeq" id="WP_012096134.1">
    <property type="nucleotide sequence ID" value="NC_009674.1"/>
</dbReference>
<dbReference type="SMR" id="A7GUR9"/>
<dbReference type="STRING" id="315749.Bcer98_3680"/>
<dbReference type="GeneID" id="33898927"/>
<dbReference type="KEGG" id="bcy:Bcer98_3680"/>
<dbReference type="eggNOG" id="COG0149">
    <property type="taxonomic scope" value="Bacteria"/>
</dbReference>
<dbReference type="HOGENOM" id="CLU_024251_2_3_9"/>
<dbReference type="OrthoDB" id="9809429at2"/>
<dbReference type="UniPathway" id="UPA00109">
    <property type="reaction ID" value="UER00189"/>
</dbReference>
<dbReference type="UniPathway" id="UPA00138"/>
<dbReference type="Proteomes" id="UP000002300">
    <property type="component" value="Chromosome"/>
</dbReference>
<dbReference type="GO" id="GO:0005829">
    <property type="term" value="C:cytosol"/>
    <property type="evidence" value="ECO:0007669"/>
    <property type="project" value="TreeGrafter"/>
</dbReference>
<dbReference type="GO" id="GO:0004807">
    <property type="term" value="F:triose-phosphate isomerase activity"/>
    <property type="evidence" value="ECO:0007669"/>
    <property type="project" value="UniProtKB-UniRule"/>
</dbReference>
<dbReference type="GO" id="GO:0006094">
    <property type="term" value="P:gluconeogenesis"/>
    <property type="evidence" value="ECO:0007669"/>
    <property type="project" value="UniProtKB-UniRule"/>
</dbReference>
<dbReference type="GO" id="GO:0046166">
    <property type="term" value="P:glyceraldehyde-3-phosphate biosynthetic process"/>
    <property type="evidence" value="ECO:0007669"/>
    <property type="project" value="TreeGrafter"/>
</dbReference>
<dbReference type="GO" id="GO:0019563">
    <property type="term" value="P:glycerol catabolic process"/>
    <property type="evidence" value="ECO:0007669"/>
    <property type="project" value="TreeGrafter"/>
</dbReference>
<dbReference type="GO" id="GO:0006096">
    <property type="term" value="P:glycolytic process"/>
    <property type="evidence" value="ECO:0007669"/>
    <property type="project" value="UniProtKB-UniRule"/>
</dbReference>
<dbReference type="CDD" id="cd00311">
    <property type="entry name" value="TIM"/>
    <property type="match status" value="1"/>
</dbReference>
<dbReference type="FunFam" id="3.20.20.70:FF:000016">
    <property type="entry name" value="Triosephosphate isomerase"/>
    <property type="match status" value="1"/>
</dbReference>
<dbReference type="Gene3D" id="3.20.20.70">
    <property type="entry name" value="Aldolase class I"/>
    <property type="match status" value="1"/>
</dbReference>
<dbReference type="HAMAP" id="MF_00147_B">
    <property type="entry name" value="TIM_B"/>
    <property type="match status" value="1"/>
</dbReference>
<dbReference type="InterPro" id="IPR013785">
    <property type="entry name" value="Aldolase_TIM"/>
</dbReference>
<dbReference type="InterPro" id="IPR035990">
    <property type="entry name" value="TIM_sf"/>
</dbReference>
<dbReference type="InterPro" id="IPR022896">
    <property type="entry name" value="TrioseP_Isoase_bac/euk"/>
</dbReference>
<dbReference type="InterPro" id="IPR000652">
    <property type="entry name" value="Triosephosphate_isomerase"/>
</dbReference>
<dbReference type="InterPro" id="IPR020861">
    <property type="entry name" value="Triosephosphate_isomerase_AS"/>
</dbReference>
<dbReference type="NCBIfam" id="TIGR00419">
    <property type="entry name" value="tim"/>
    <property type="match status" value="1"/>
</dbReference>
<dbReference type="PANTHER" id="PTHR21139">
    <property type="entry name" value="TRIOSEPHOSPHATE ISOMERASE"/>
    <property type="match status" value="1"/>
</dbReference>
<dbReference type="PANTHER" id="PTHR21139:SF42">
    <property type="entry name" value="TRIOSEPHOSPHATE ISOMERASE"/>
    <property type="match status" value="1"/>
</dbReference>
<dbReference type="Pfam" id="PF00121">
    <property type="entry name" value="TIM"/>
    <property type="match status" value="1"/>
</dbReference>
<dbReference type="SUPFAM" id="SSF51351">
    <property type="entry name" value="Triosephosphate isomerase (TIM)"/>
    <property type="match status" value="1"/>
</dbReference>
<dbReference type="PROSITE" id="PS00171">
    <property type="entry name" value="TIM_1"/>
    <property type="match status" value="1"/>
</dbReference>
<dbReference type="PROSITE" id="PS51440">
    <property type="entry name" value="TIM_2"/>
    <property type="match status" value="1"/>
</dbReference>
<comment type="function">
    <text evidence="1">Involved in the gluconeogenesis. Catalyzes stereospecifically the conversion of dihydroxyacetone phosphate (DHAP) to D-glyceraldehyde-3-phosphate (G3P).</text>
</comment>
<comment type="catalytic activity">
    <reaction evidence="1">
        <text>D-glyceraldehyde 3-phosphate = dihydroxyacetone phosphate</text>
        <dbReference type="Rhea" id="RHEA:18585"/>
        <dbReference type="ChEBI" id="CHEBI:57642"/>
        <dbReference type="ChEBI" id="CHEBI:59776"/>
        <dbReference type="EC" id="5.3.1.1"/>
    </reaction>
</comment>
<comment type="pathway">
    <text evidence="1">Carbohydrate biosynthesis; gluconeogenesis.</text>
</comment>
<comment type="pathway">
    <text evidence="1">Carbohydrate degradation; glycolysis; D-glyceraldehyde 3-phosphate from glycerone phosphate: step 1/1.</text>
</comment>
<comment type="subunit">
    <text evidence="1">Homodimer.</text>
</comment>
<comment type="subcellular location">
    <subcellularLocation>
        <location evidence="1">Cytoplasm</location>
    </subcellularLocation>
</comment>
<comment type="similarity">
    <text evidence="1">Belongs to the triosephosphate isomerase family.</text>
</comment>
<reference key="1">
    <citation type="journal article" date="2008" name="Chem. Biol. Interact.">
        <title>Extending the Bacillus cereus group genomics to putative food-borne pathogens of different toxicity.</title>
        <authorList>
            <person name="Lapidus A."/>
            <person name="Goltsman E."/>
            <person name="Auger S."/>
            <person name="Galleron N."/>
            <person name="Segurens B."/>
            <person name="Dossat C."/>
            <person name="Land M.L."/>
            <person name="Broussolle V."/>
            <person name="Brillard J."/>
            <person name="Guinebretiere M.-H."/>
            <person name="Sanchis V."/>
            <person name="Nguen-the C."/>
            <person name="Lereclus D."/>
            <person name="Richardson P."/>
            <person name="Wincker P."/>
            <person name="Weissenbach J."/>
            <person name="Ehrlich S.D."/>
            <person name="Sorokin A."/>
        </authorList>
    </citation>
    <scope>NUCLEOTIDE SEQUENCE [LARGE SCALE GENOMIC DNA]</scope>
    <source>
        <strain>DSM 22905 / CIP 110041 / 391-98 / NVH 391-98</strain>
    </source>
</reference>